<name>RNH2_OLEA2</name>
<gene>
    <name evidence="1" type="primary">rnhB</name>
    <name type="ordered locus">Dde_1094</name>
</gene>
<accession>Q313K1</accession>
<evidence type="ECO:0000255" key="1">
    <source>
        <dbReference type="HAMAP-Rule" id="MF_00052"/>
    </source>
</evidence>
<evidence type="ECO:0000255" key="2">
    <source>
        <dbReference type="PROSITE-ProRule" id="PRU01319"/>
    </source>
</evidence>
<organism>
    <name type="scientific">Oleidesulfovibrio alaskensis (strain ATCC BAA-1058 / DSM 17464 / G20)</name>
    <name type="common">Desulfovibrio alaskensis</name>
    <dbReference type="NCBI Taxonomy" id="207559"/>
    <lineage>
        <taxon>Bacteria</taxon>
        <taxon>Pseudomonadati</taxon>
        <taxon>Thermodesulfobacteriota</taxon>
        <taxon>Desulfovibrionia</taxon>
        <taxon>Desulfovibrionales</taxon>
        <taxon>Desulfovibrionaceae</taxon>
        <taxon>Oleidesulfovibrio</taxon>
    </lineage>
</organism>
<dbReference type="EC" id="3.1.26.4" evidence="1"/>
<dbReference type="EMBL" id="CP000112">
    <property type="protein sequence ID" value="ABB37895.1"/>
    <property type="molecule type" value="Genomic_DNA"/>
</dbReference>
<dbReference type="RefSeq" id="WP_011367125.1">
    <property type="nucleotide sequence ID" value="NC_007519.1"/>
</dbReference>
<dbReference type="SMR" id="Q313K1"/>
<dbReference type="STRING" id="207559.Dde_1094"/>
<dbReference type="KEGG" id="dde:Dde_1094"/>
<dbReference type="eggNOG" id="COG0164">
    <property type="taxonomic scope" value="Bacteria"/>
</dbReference>
<dbReference type="HOGENOM" id="CLU_036532_3_1_7"/>
<dbReference type="Proteomes" id="UP000002710">
    <property type="component" value="Chromosome"/>
</dbReference>
<dbReference type="GO" id="GO:0005737">
    <property type="term" value="C:cytoplasm"/>
    <property type="evidence" value="ECO:0007669"/>
    <property type="project" value="UniProtKB-SubCell"/>
</dbReference>
<dbReference type="GO" id="GO:0032299">
    <property type="term" value="C:ribonuclease H2 complex"/>
    <property type="evidence" value="ECO:0007669"/>
    <property type="project" value="TreeGrafter"/>
</dbReference>
<dbReference type="GO" id="GO:0030145">
    <property type="term" value="F:manganese ion binding"/>
    <property type="evidence" value="ECO:0007669"/>
    <property type="project" value="UniProtKB-UniRule"/>
</dbReference>
<dbReference type="GO" id="GO:0003723">
    <property type="term" value="F:RNA binding"/>
    <property type="evidence" value="ECO:0007669"/>
    <property type="project" value="InterPro"/>
</dbReference>
<dbReference type="GO" id="GO:0004523">
    <property type="term" value="F:RNA-DNA hybrid ribonuclease activity"/>
    <property type="evidence" value="ECO:0007669"/>
    <property type="project" value="UniProtKB-UniRule"/>
</dbReference>
<dbReference type="GO" id="GO:0043137">
    <property type="term" value="P:DNA replication, removal of RNA primer"/>
    <property type="evidence" value="ECO:0007669"/>
    <property type="project" value="TreeGrafter"/>
</dbReference>
<dbReference type="GO" id="GO:0006298">
    <property type="term" value="P:mismatch repair"/>
    <property type="evidence" value="ECO:0007669"/>
    <property type="project" value="TreeGrafter"/>
</dbReference>
<dbReference type="CDD" id="cd07182">
    <property type="entry name" value="RNase_HII_bacteria_HII_like"/>
    <property type="match status" value="1"/>
</dbReference>
<dbReference type="Gene3D" id="3.30.420.10">
    <property type="entry name" value="Ribonuclease H-like superfamily/Ribonuclease H"/>
    <property type="match status" value="1"/>
</dbReference>
<dbReference type="HAMAP" id="MF_00052_B">
    <property type="entry name" value="RNase_HII_B"/>
    <property type="match status" value="1"/>
</dbReference>
<dbReference type="InterPro" id="IPR022898">
    <property type="entry name" value="RNase_HII"/>
</dbReference>
<dbReference type="InterPro" id="IPR001352">
    <property type="entry name" value="RNase_HII/HIII"/>
</dbReference>
<dbReference type="InterPro" id="IPR024567">
    <property type="entry name" value="RNase_HII/HIII_dom"/>
</dbReference>
<dbReference type="InterPro" id="IPR012337">
    <property type="entry name" value="RNaseH-like_sf"/>
</dbReference>
<dbReference type="InterPro" id="IPR036397">
    <property type="entry name" value="RNaseH_sf"/>
</dbReference>
<dbReference type="NCBIfam" id="NF000595">
    <property type="entry name" value="PRK00015.1-3"/>
    <property type="match status" value="1"/>
</dbReference>
<dbReference type="PANTHER" id="PTHR10954">
    <property type="entry name" value="RIBONUCLEASE H2 SUBUNIT A"/>
    <property type="match status" value="1"/>
</dbReference>
<dbReference type="PANTHER" id="PTHR10954:SF18">
    <property type="entry name" value="RIBONUCLEASE HII"/>
    <property type="match status" value="1"/>
</dbReference>
<dbReference type="Pfam" id="PF01351">
    <property type="entry name" value="RNase_HII"/>
    <property type="match status" value="1"/>
</dbReference>
<dbReference type="SUPFAM" id="SSF53098">
    <property type="entry name" value="Ribonuclease H-like"/>
    <property type="match status" value="1"/>
</dbReference>
<dbReference type="PROSITE" id="PS51975">
    <property type="entry name" value="RNASE_H_2"/>
    <property type="match status" value="1"/>
</dbReference>
<reference key="1">
    <citation type="journal article" date="2011" name="J. Bacteriol.">
        <title>Complete genome sequence and updated annotation of Desulfovibrio alaskensis G20.</title>
        <authorList>
            <person name="Hauser L.J."/>
            <person name="Land M.L."/>
            <person name="Brown S.D."/>
            <person name="Larimer F."/>
            <person name="Keller K.L."/>
            <person name="Rapp-Giles B.J."/>
            <person name="Price M.N."/>
            <person name="Lin M."/>
            <person name="Bruce D.C."/>
            <person name="Detter J.C."/>
            <person name="Tapia R."/>
            <person name="Han C.S."/>
            <person name="Goodwin L.A."/>
            <person name="Cheng J.F."/>
            <person name="Pitluck S."/>
            <person name="Copeland A."/>
            <person name="Lucas S."/>
            <person name="Nolan M."/>
            <person name="Lapidus A.L."/>
            <person name="Palumbo A.V."/>
            <person name="Wall J.D."/>
        </authorList>
    </citation>
    <scope>NUCLEOTIDE SEQUENCE [LARGE SCALE GENOMIC DNA]</scope>
    <source>
        <strain>ATCC BAA-1058 / DSM 17464 / G20</strain>
    </source>
</reference>
<sequence length="263" mass="27308">MAARTKNGLTASASGMQSLLPHTLPHADPAGPRDSLYPAFFTGIDEAGRGCLAGPVVAAAVILPPAGAPAAPHIAAALSGLTDSKKLSEKRRLTLEPAIKSCAVRWGVGVVWPQVIDRINILQATYRAMSLAVRHLRGGGAAASMPAGLPPVFLAVDGDKTIPGQVLQAVTGLSVPQEAIVGGDGCVMAISAASVLAKTFRDRLMTALDKRYSGYGFATHKGYGTAAHIEAIRRLGPCRMHRLSFAKVKPAAAPHAADQNTLW</sequence>
<protein>
    <recommendedName>
        <fullName evidence="1">Ribonuclease HII</fullName>
        <shortName evidence="1">RNase HII</shortName>
        <ecNumber evidence="1">3.1.26.4</ecNumber>
    </recommendedName>
</protein>
<proteinExistence type="inferred from homology"/>
<comment type="function">
    <text evidence="1">Endonuclease that specifically degrades the RNA of RNA-DNA hybrids.</text>
</comment>
<comment type="catalytic activity">
    <reaction evidence="1">
        <text>Endonucleolytic cleavage to 5'-phosphomonoester.</text>
        <dbReference type="EC" id="3.1.26.4"/>
    </reaction>
</comment>
<comment type="cofactor">
    <cofactor evidence="1">
        <name>Mn(2+)</name>
        <dbReference type="ChEBI" id="CHEBI:29035"/>
    </cofactor>
    <cofactor evidence="1">
        <name>Mg(2+)</name>
        <dbReference type="ChEBI" id="CHEBI:18420"/>
    </cofactor>
    <text evidence="1">Manganese or magnesium. Binds 1 divalent metal ion per monomer in the absence of substrate. May bind a second metal ion after substrate binding.</text>
</comment>
<comment type="subcellular location">
    <subcellularLocation>
        <location evidence="1">Cytoplasm</location>
    </subcellularLocation>
</comment>
<comment type="similarity">
    <text evidence="1">Belongs to the RNase HII family.</text>
</comment>
<feature type="chain" id="PRO_0000235719" description="Ribonuclease HII">
    <location>
        <begin position="1"/>
        <end position="263"/>
    </location>
</feature>
<feature type="domain" description="RNase H type-2" evidence="2">
    <location>
        <begin position="39"/>
        <end position="257"/>
    </location>
</feature>
<feature type="binding site" evidence="1">
    <location>
        <position position="45"/>
    </location>
    <ligand>
        <name>a divalent metal cation</name>
        <dbReference type="ChEBI" id="CHEBI:60240"/>
    </ligand>
</feature>
<feature type="binding site" evidence="1">
    <location>
        <position position="46"/>
    </location>
    <ligand>
        <name>a divalent metal cation</name>
        <dbReference type="ChEBI" id="CHEBI:60240"/>
    </ligand>
</feature>
<feature type="binding site" evidence="1">
    <location>
        <position position="157"/>
    </location>
    <ligand>
        <name>a divalent metal cation</name>
        <dbReference type="ChEBI" id="CHEBI:60240"/>
    </ligand>
</feature>
<keyword id="KW-0963">Cytoplasm</keyword>
<keyword id="KW-0255">Endonuclease</keyword>
<keyword id="KW-0378">Hydrolase</keyword>
<keyword id="KW-0464">Manganese</keyword>
<keyword id="KW-0479">Metal-binding</keyword>
<keyword id="KW-0540">Nuclease</keyword>
<keyword id="KW-1185">Reference proteome</keyword>